<dbReference type="EMBL" id="CP000736">
    <property type="protein sequence ID" value="ABR51826.1"/>
    <property type="molecule type" value="Genomic_DNA"/>
</dbReference>
<dbReference type="SMR" id="A6U058"/>
<dbReference type="KEGG" id="sah:SaurJH1_0970"/>
<dbReference type="HOGENOM" id="CLU_101659_1_1_9"/>
<dbReference type="GO" id="GO:0005886">
    <property type="term" value="C:plasma membrane"/>
    <property type="evidence" value="ECO:0007669"/>
    <property type="project" value="UniProtKB-SubCell"/>
</dbReference>
<dbReference type="GO" id="GO:0015297">
    <property type="term" value="F:antiporter activity"/>
    <property type="evidence" value="ECO:0007669"/>
    <property type="project" value="UniProtKB-KW"/>
</dbReference>
<dbReference type="GO" id="GO:0008324">
    <property type="term" value="F:monoatomic cation transmembrane transporter activity"/>
    <property type="evidence" value="ECO:0007669"/>
    <property type="project" value="InterPro"/>
</dbReference>
<dbReference type="GO" id="GO:1902600">
    <property type="term" value="P:proton transmembrane transport"/>
    <property type="evidence" value="ECO:0007669"/>
    <property type="project" value="UniProtKB-KW"/>
</dbReference>
<dbReference type="GO" id="GO:0006814">
    <property type="term" value="P:sodium ion transport"/>
    <property type="evidence" value="ECO:0007669"/>
    <property type="project" value="UniProtKB-KW"/>
</dbReference>
<dbReference type="InterPro" id="IPR050622">
    <property type="entry name" value="CPA3_antiporter_subunitB"/>
</dbReference>
<dbReference type="InterPro" id="IPR005281">
    <property type="entry name" value="CPA3_sub_B"/>
</dbReference>
<dbReference type="InterPro" id="IPR007182">
    <property type="entry name" value="MnhB"/>
</dbReference>
<dbReference type="NCBIfam" id="TIGR00943">
    <property type="entry name" value="2a6301s02"/>
    <property type="match status" value="1"/>
</dbReference>
<dbReference type="NCBIfam" id="NF009223">
    <property type="entry name" value="PRK12573.1"/>
    <property type="match status" value="1"/>
</dbReference>
<dbReference type="PANTHER" id="PTHR33932">
    <property type="entry name" value="NA(+)/H(+) ANTIPORTER SUBUNIT B"/>
    <property type="match status" value="1"/>
</dbReference>
<dbReference type="PANTHER" id="PTHR33932:SF4">
    <property type="entry name" value="NA(+)_H(+) ANTIPORTER SUBUNIT B"/>
    <property type="match status" value="1"/>
</dbReference>
<dbReference type="Pfam" id="PF04039">
    <property type="entry name" value="MnhB"/>
    <property type="match status" value="1"/>
</dbReference>
<gene>
    <name type="primary">mnhB1</name>
    <name type="ordered locus">SaurJH1_0970</name>
</gene>
<evidence type="ECO:0000250" key="1"/>
<evidence type="ECO:0000255" key="2"/>
<evidence type="ECO:0000305" key="3"/>
<organism>
    <name type="scientific">Staphylococcus aureus (strain JH1)</name>
    <dbReference type="NCBI Taxonomy" id="359787"/>
    <lineage>
        <taxon>Bacteria</taxon>
        <taxon>Bacillati</taxon>
        <taxon>Bacillota</taxon>
        <taxon>Bacilli</taxon>
        <taxon>Bacillales</taxon>
        <taxon>Staphylococcaceae</taxon>
        <taxon>Staphylococcus</taxon>
    </lineage>
</organism>
<proteinExistence type="inferred from homology"/>
<comment type="function">
    <text evidence="1">Mnh complex is a Na(+)/H(+) antiporter involved in Na(+) excretion.</text>
</comment>
<comment type="subunit">
    <text evidence="1">May form a heterooligomeric complex that consists of seven subunits: mnhA1, mnhB1, mnhC1, mnhD1, mnhE1, mnhF1 and mnhG1.</text>
</comment>
<comment type="subcellular location">
    <subcellularLocation>
        <location evidence="3">Cell membrane</location>
        <topology evidence="3">Multi-pass membrane protein</topology>
    </subcellularLocation>
</comment>
<comment type="similarity">
    <text evidence="3">Belongs to the CPA3 antiporters (TC 2.A.63) subunit B family.</text>
</comment>
<accession>A6U058</accession>
<name>MNHB1_STAA2</name>
<protein>
    <recommendedName>
        <fullName>Na(+)/H(+) antiporter subunit B1</fullName>
    </recommendedName>
    <alternativeName>
        <fullName>Mnh complex subunit B1</fullName>
    </alternativeName>
</protein>
<sequence length="142" mass="15682">MNRQQNDLILQFAAVIIFFMVMVFGFSLFLAGHYTPGGGFVGGLLFASSLVIITIAFDIETMRKIFPLDFKILIGIGLVFCIATPIASWFLGKNFFTHVTFDIPLFILEPVHMTTAVFFDFGVLCAVVGTVMTIIISIGENE</sequence>
<feature type="chain" id="PRO_0000372106" description="Na(+)/H(+) antiporter subunit B1">
    <location>
        <begin position="1"/>
        <end position="142"/>
    </location>
</feature>
<feature type="transmembrane region" description="Helical" evidence="2">
    <location>
        <begin position="12"/>
        <end position="32"/>
    </location>
</feature>
<feature type="transmembrane region" description="Helical" evidence="2">
    <location>
        <begin position="37"/>
        <end position="57"/>
    </location>
</feature>
<feature type="transmembrane region" description="Helical" evidence="2">
    <location>
        <begin position="72"/>
        <end position="92"/>
    </location>
</feature>
<feature type="transmembrane region" description="Helical" evidence="2">
    <location>
        <begin position="116"/>
        <end position="136"/>
    </location>
</feature>
<keyword id="KW-0050">Antiport</keyword>
<keyword id="KW-1003">Cell membrane</keyword>
<keyword id="KW-0375">Hydrogen ion transport</keyword>
<keyword id="KW-0406">Ion transport</keyword>
<keyword id="KW-0472">Membrane</keyword>
<keyword id="KW-0915">Sodium</keyword>
<keyword id="KW-0739">Sodium transport</keyword>
<keyword id="KW-0812">Transmembrane</keyword>
<keyword id="KW-1133">Transmembrane helix</keyword>
<keyword id="KW-0813">Transport</keyword>
<reference key="1">
    <citation type="submission" date="2007-06" db="EMBL/GenBank/DDBJ databases">
        <title>Complete sequence of chromosome of Staphylococcus aureus subsp. aureus JH1.</title>
        <authorList>
            <consortium name="US DOE Joint Genome Institute"/>
            <person name="Copeland A."/>
            <person name="Lucas S."/>
            <person name="Lapidus A."/>
            <person name="Barry K."/>
            <person name="Detter J.C."/>
            <person name="Glavina del Rio T."/>
            <person name="Hammon N."/>
            <person name="Israni S."/>
            <person name="Dalin E."/>
            <person name="Tice H."/>
            <person name="Pitluck S."/>
            <person name="Chain P."/>
            <person name="Malfatti S."/>
            <person name="Shin M."/>
            <person name="Vergez L."/>
            <person name="Schmutz J."/>
            <person name="Larimer F."/>
            <person name="Land M."/>
            <person name="Hauser L."/>
            <person name="Kyrpides N."/>
            <person name="Ivanova N."/>
            <person name="Tomasz A."/>
            <person name="Richardson P."/>
        </authorList>
    </citation>
    <scope>NUCLEOTIDE SEQUENCE [LARGE SCALE GENOMIC DNA]</scope>
    <source>
        <strain>JH1</strain>
    </source>
</reference>